<comment type="function">
    <text evidence="5">Sulfotransferase that utilizes 3'-phospho-5'-adenylyl sulfate (PAPS) as sulfonate donor to catalyze the transfer of sulfate to position 6 of non-reducing N-acetylglucosamine (GlcNAc) residues. Preferentially acts on mannose-linked GlcNAc. Also able to catalyze the transfer of sulfate to position 6 of the N-acetylgalactosamine (GalNAc) residue of chondroitin. Also acts on core 2 mucin-type oligosaccharide and N-acetyllactosamine oligomer with a lower efficiency. Has weak or no activity toward keratan sulfate and oligosaccharides containing the Galbeta1-4GlcNAc. Catalyzes 6-O-sulfation of beta-benzyl GlcNAc but not alpha- or beta-benzyl GalNAc.</text>
</comment>
<comment type="catalytic activity">
    <reaction>
        <text>chondroitin beta-D-glucuronate + n 3'-phosphoadenylyl sulfate = chondroitin 6'-sulfate + n adenosine 3',5'-bisphosphate + n H(+)</text>
        <dbReference type="Rhea" id="RHEA:11108"/>
        <dbReference type="Rhea" id="RHEA-COMP:9827"/>
        <dbReference type="Rhea" id="RHEA-COMP:9828"/>
        <dbReference type="ChEBI" id="CHEBI:15378"/>
        <dbReference type="ChEBI" id="CHEBI:57652"/>
        <dbReference type="ChEBI" id="CHEBI:58339"/>
        <dbReference type="ChEBI" id="CHEBI:58343"/>
        <dbReference type="ChEBI" id="CHEBI:62065"/>
        <dbReference type="EC" id="2.8.2.17"/>
    </reaction>
</comment>
<comment type="subcellular location">
    <subcellularLocation>
        <location evidence="1">Golgi apparatus membrane</location>
        <topology evidence="1">Single-pass type II membrane protein</topology>
    </subcellularLocation>
</comment>
<comment type="tissue specificity">
    <text evidence="5">Widely expressed. Highly expressed in kidney. Expressed at lower level in heart, lung and liver.</text>
</comment>
<comment type="similarity">
    <text evidence="6">Belongs to the sulfotransferase 1 family. Gal/GlcNAc/GalNAc subfamily.</text>
</comment>
<dbReference type="EC" id="2.8.2.-"/>
<dbReference type="EC" id="2.8.2.17"/>
<dbReference type="EMBL" id="AB040710">
    <property type="protein sequence ID" value="BAB13769.1"/>
    <property type="molecule type" value="mRNA"/>
</dbReference>
<dbReference type="EMBL" id="AF280089">
    <property type="protein sequence ID" value="AAG48247.1"/>
    <property type="molecule type" value="Genomic_DNA"/>
</dbReference>
<dbReference type="EMBL" id="AB046929">
    <property type="protein sequence ID" value="BAB40372.1"/>
    <property type="molecule type" value="mRNA"/>
</dbReference>
<dbReference type="EMBL" id="AK011202">
    <property type="protein sequence ID" value="BAB27465.1"/>
    <property type="molecule type" value="mRNA"/>
</dbReference>
<dbReference type="EMBL" id="BC019204">
    <property type="protein sequence ID" value="AAH19204.1"/>
    <property type="molecule type" value="mRNA"/>
</dbReference>
<dbReference type="CCDS" id="CCDS30040.1"/>
<dbReference type="PIR" id="JC7350">
    <property type="entry name" value="JC7350"/>
</dbReference>
<dbReference type="RefSeq" id="NP_068361.1">
    <property type="nucleotide sequence ID" value="NM_021715.1"/>
</dbReference>
<dbReference type="FunCoup" id="Q9EP78">
    <property type="interactions" value="456"/>
</dbReference>
<dbReference type="STRING" id="10090.ENSMUSP00000043222"/>
<dbReference type="GlyCosmos" id="Q9EP78">
    <property type="glycosylation" value="3 sites, No reported glycans"/>
</dbReference>
<dbReference type="GlyGen" id="Q9EP78">
    <property type="glycosylation" value="3 sites, 1 N-linked glycan (1 site)"/>
</dbReference>
<dbReference type="PhosphoSitePlus" id="Q9EP78"/>
<dbReference type="SwissPalm" id="Q9EP78"/>
<dbReference type="PaxDb" id="10090-ENSMUSP00000043222"/>
<dbReference type="PeptideAtlas" id="Q9EP78"/>
<dbReference type="ProteomicsDB" id="281676"/>
<dbReference type="Antibodypedia" id="11072">
    <property type="antibodies" value="55 antibodies from 19 providers"/>
</dbReference>
<dbReference type="DNASU" id="60322"/>
<dbReference type="Ensembl" id="ENSMUST00000044138.8">
    <property type="protein sequence ID" value="ENSMUSP00000043222.8"/>
    <property type="gene ID" value="ENSMUSG00000037347.8"/>
</dbReference>
<dbReference type="GeneID" id="60322"/>
<dbReference type="KEGG" id="mmu:60322"/>
<dbReference type="UCSC" id="uc009sss.1">
    <property type="organism name" value="mouse"/>
</dbReference>
<dbReference type="AGR" id="MGI:1891767"/>
<dbReference type="CTD" id="56548"/>
<dbReference type="MGI" id="MGI:1891767">
    <property type="gene designation" value="Chst7"/>
</dbReference>
<dbReference type="VEuPathDB" id="HostDB:ENSMUSG00000037347"/>
<dbReference type="eggNOG" id="ENOG502QRPV">
    <property type="taxonomic scope" value="Eukaryota"/>
</dbReference>
<dbReference type="GeneTree" id="ENSGT00940000162231"/>
<dbReference type="HOGENOM" id="CLU_028381_1_0_1"/>
<dbReference type="InParanoid" id="Q9EP78"/>
<dbReference type="OMA" id="WKMNKVI"/>
<dbReference type="OrthoDB" id="6138663at2759"/>
<dbReference type="PhylomeDB" id="Q9EP78"/>
<dbReference type="TreeFam" id="TF342871"/>
<dbReference type="BRENDA" id="2.8.2.17">
    <property type="organism ID" value="3474"/>
</dbReference>
<dbReference type="Reactome" id="R-MMU-2022870">
    <property type="pathway name" value="Chondroitin sulfate biosynthesis"/>
</dbReference>
<dbReference type="BioGRID-ORCS" id="60322">
    <property type="hits" value="1 hit in 78 CRISPR screens"/>
</dbReference>
<dbReference type="PRO" id="PR:Q9EP78"/>
<dbReference type="Proteomes" id="UP000000589">
    <property type="component" value="Chromosome X"/>
</dbReference>
<dbReference type="RNAct" id="Q9EP78">
    <property type="molecule type" value="protein"/>
</dbReference>
<dbReference type="Bgee" id="ENSMUSG00000037347">
    <property type="expression patterns" value="Expressed in right kidney and 128 other cell types or tissues"/>
</dbReference>
<dbReference type="GO" id="GO:0005794">
    <property type="term" value="C:Golgi apparatus"/>
    <property type="evidence" value="ECO:0000314"/>
    <property type="project" value="MGI"/>
</dbReference>
<dbReference type="GO" id="GO:0000139">
    <property type="term" value="C:Golgi membrane"/>
    <property type="evidence" value="ECO:0007669"/>
    <property type="project" value="UniProtKB-SubCell"/>
</dbReference>
<dbReference type="GO" id="GO:0008459">
    <property type="term" value="F:chondroitin 6-sulfotransferase activity"/>
    <property type="evidence" value="ECO:0000314"/>
    <property type="project" value="MGI"/>
</dbReference>
<dbReference type="GO" id="GO:0001517">
    <property type="term" value="F:N-acetylglucosamine 6-O-sulfotransferase activity"/>
    <property type="evidence" value="ECO:0007669"/>
    <property type="project" value="Ensembl"/>
</dbReference>
<dbReference type="GO" id="GO:0005975">
    <property type="term" value="P:carbohydrate metabolic process"/>
    <property type="evidence" value="ECO:0007669"/>
    <property type="project" value="InterPro"/>
</dbReference>
<dbReference type="GO" id="GO:0050650">
    <property type="term" value="P:chondroitin sulfate proteoglycan biosynthetic process"/>
    <property type="evidence" value="ECO:0000266"/>
    <property type="project" value="MGI"/>
</dbReference>
<dbReference type="GO" id="GO:0006044">
    <property type="term" value="P:N-acetylglucosamine metabolic process"/>
    <property type="evidence" value="ECO:0007669"/>
    <property type="project" value="Ensembl"/>
</dbReference>
<dbReference type="Gene3D" id="3.40.50.300">
    <property type="entry name" value="P-loop containing nucleotide triphosphate hydrolases"/>
    <property type="match status" value="1"/>
</dbReference>
<dbReference type="InterPro" id="IPR016469">
    <property type="entry name" value="Carbohydrate_sulfotransferase"/>
</dbReference>
<dbReference type="InterPro" id="IPR051135">
    <property type="entry name" value="Gal/GlcNAc/GalNAc_ST"/>
</dbReference>
<dbReference type="InterPro" id="IPR027417">
    <property type="entry name" value="P-loop_NTPase"/>
</dbReference>
<dbReference type="InterPro" id="IPR000863">
    <property type="entry name" value="Sulfotransferase_dom"/>
</dbReference>
<dbReference type="PANTHER" id="PTHR10704">
    <property type="entry name" value="CARBOHYDRATE SULFOTRANSFERASE"/>
    <property type="match status" value="1"/>
</dbReference>
<dbReference type="PANTHER" id="PTHR10704:SF5">
    <property type="entry name" value="CARBOHYDRATE SULFOTRANSFERASE 7"/>
    <property type="match status" value="1"/>
</dbReference>
<dbReference type="Pfam" id="PF00685">
    <property type="entry name" value="Sulfotransfer_1"/>
    <property type="match status" value="1"/>
</dbReference>
<dbReference type="PIRSF" id="PIRSF005883">
    <property type="entry name" value="Carbohydrate_sulfotransferase"/>
    <property type="match status" value="1"/>
</dbReference>
<dbReference type="SUPFAM" id="SSF52540">
    <property type="entry name" value="P-loop containing nucleoside triphosphate hydrolases"/>
    <property type="match status" value="1"/>
</dbReference>
<organism>
    <name type="scientific">Mus musculus</name>
    <name type="common">Mouse</name>
    <dbReference type="NCBI Taxonomy" id="10090"/>
    <lineage>
        <taxon>Eukaryota</taxon>
        <taxon>Metazoa</taxon>
        <taxon>Chordata</taxon>
        <taxon>Craniata</taxon>
        <taxon>Vertebrata</taxon>
        <taxon>Euteleostomi</taxon>
        <taxon>Mammalia</taxon>
        <taxon>Eutheria</taxon>
        <taxon>Euarchontoglires</taxon>
        <taxon>Glires</taxon>
        <taxon>Rodentia</taxon>
        <taxon>Myomorpha</taxon>
        <taxon>Muroidea</taxon>
        <taxon>Muridae</taxon>
        <taxon>Murinae</taxon>
        <taxon>Mus</taxon>
        <taxon>Mus</taxon>
    </lineage>
</organism>
<name>CHST7_MOUSE</name>
<gene>
    <name type="primary">Chst7</name>
    <name type="synonym">Gst5</name>
</gene>
<sequence>MKGRRRRRREYCKFTLLLALYTLLLLLVPSVLDSHSEQDKGRNCPGLQRSLGVWSLEAAAAGEREQGAEVRSLAEGNPDRSPGSPGNLSAVGEAVTQEKQHIYVHATWRTGSSFLGELFNQHPDVFYLYEPMWHLWQALYPGDAESLQGALRDMLRSLFRCDFSVLRLYAQPGDPGERAPDSANLTTAMLFRWRTNKVICSPPLCPAAPRARADVGLVEDKACESTCPPVSLRALEAECRKYPVVVIKDVRLLDLGVLVPLLRDPGLNLKVVQLFRDPRAVHNSRLKSRQGLLRESIQVLRTRQRGDHFHRVLLAHGVDARPGGQARALPSAPRADFFLTSALEVICEAWLRDLLFTRGAPAWLRRRYLRLRYEDLVWQPQAQLRRLLRFSGLRTLAALDAFAFNMTRGSAYGADRPFHLSARDAREAVHAWRERLSQEQVRQVETACAPAMRLLAYPRSGDERDRKTVREGETPLETKANWAV</sequence>
<proteinExistence type="evidence at transcript level"/>
<protein>
    <recommendedName>
        <fullName>Carbohydrate sulfotransferase 7</fullName>
        <ecNumber>2.8.2.-</ecNumber>
        <ecNumber>2.8.2.17</ecNumber>
    </recommendedName>
    <alternativeName>
        <fullName>Chondroitin 6-sulfotransferase 2</fullName>
        <shortName>C6ST-2</shortName>
        <shortName>mC6ST-2</shortName>
    </alternativeName>
    <alternativeName>
        <fullName>Galactose/N-acetylglucosamine/N-acetylglucosamine 6-O-sulfotransferase 5</fullName>
        <shortName>GST-5</shortName>
    </alternativeName>
    <alternativeName>
        <fullName>N-acetylglucosamine 6-O-sulfotransferase 4</fullName>
        <shortName>GlcNAc6ST-4</shortName>
        <shortName>Gn6st-4</shortName>
    </alternativeName>
</protein>
<reference key="1">
    <citation type="journal article" date="2000" name="Biochem. Biophys. Res. Commun.">
        <title>Diversity of N-acetylglucosamine-6-O-sulfotransferases: molecular cloning of a novel enzyme with different distribution and specificities.</title>
        <authorList>
            <person name="Uchimura K."/>
            <person name="Fasakhany F."/>
            <person name="Kadomatsu K."/>
            <person name="Matsukawa T."/>
            <person name="Yamakawa T."/>
            <person name="Kurosawa N."/>
            <person name="Muramatsu T."/>
        </authorList>
    </citation>
    <scope>NUCLEOTIDE SEQUENCE [MRNA]</scope>
    <scope>FUNCTION</scope>
    <scope>TISSUE SPECIFICITY</scope>
    <source>
        <tissue>Brain</tissue>
    </source>
</reference>
<reference key="2">
    <citation type="journal article" date="2000" name="J. Biol. Chem.">
        <title>Sulfation of N-acetylglucosamine by chondroitin 6-sulfotransferase 2 (GST-5).</title>
        <authorList>
            <person name="Bhakta S."/>
            <person name="Bartes A."/>
            <person name="Bowman K.G."/>
            <person name="Kao W.-M."/>
            <person name="Polsky I."/>
            <person name="Lee J.-K."/>
            <person name="Cook B.N."/>
            <person name="Bruehl R.E."/>
            <person name="Rosen S.D."/>
            <person name="Bertozzi C.R."/>
            <person name="Hemmerich S."/>
        </authorList>
    </citation>
    <scope>NUCLEOTIDE SEQUENCE [GENOMIC DNA]</scope>
    <source>
        <strain>C57BL/6J</strain>
    </source>
</reference>
<reference key="3">
    <citation type="submission" date="2000-08" db="EMBL/GenBank/DDBJ databases">
        <title>Cloning and expression of mouse chondroitin 6-sulfotransferase-2.</title>
        <authorList>
            <person name="Kitagawa H."/>
            <person name="Uyama T."/>
            <person name="Sugahara K."/>
        </authorList>
    </citation>
    <scope>NUCLEOTIDE SEQUENCE [MRNA]</scope>
    <source>
        <tissue>Mammary gland</tissue>
    </source>
</reference>
<reference key="4">
    <citation type="journal article" date="2005" name="Science">
        <title>The transcriptional landscape of the mammalian genome.</title>
        <authorList>
            <person name="Carninci P."/>
            <person name="Kasukawa T."/>
            <person name="Katayama S."/>
            <person name="Gough J."/>
            <person name="Frith M.C."/>
            <person name="Maeda N."/>
            <person name="Oyama R."/>
            <person name="Ravasi T."/>
            <person name="Lenhard B."/>
            <person name="Wells C."/>
            <person name="Kodzius R."/>
            <person name="Shimokawa K."/>
            <person name="Bajic V.B."/>
            <person name="Brenner S.E."/>
            <person name="Batalov S."/>
            <person name="Forrest A.R."/>
            <person name="Zavolan M."/>
            <person name="Davis M.J."/>
            <person name="Wilming L.G."/>
            <person name="Aidinis V."/>
            <person name="Allen J.E."/>
            <person name="Ambesi-Impiombato A."/>
            <person name="Apweiler R."/>
            <person name="Aturaliya R.N."/>
            <person name="Bailey T.L."/>
            <person name="Bansal M."/>
            <person name="Baxter L."/>
            <person name="Beisel K.W."/>
            <person name="Bersano T."/>
            <person name="Bono H."/>
            <person name="Chalk A.M."/>
            <person name="Chiu K.P."/>
            <person name="Choudhary V."/>
            <person name="Christoffels A."/>
            <person name="Clutterbuck D.R."/>
            <person name="Crowe M.L."/>
            <person name="Dalla E."/>
            <person name="Dalrymple B.P."/>
            <person name="de Bono B."/>
            <person name="Della Gatta G."/>
            <person name="di Bernardo D."/>
            <person name="Down T."/>
            <person name="Engstrom P."/>
            <person name="Fagiolini M."/>
            <person name="Faulkner G."/>
            <person name="Fletcher C.F."/>
            <person name="Fukushima T."/>
            <person name="Furuno M."/>
            <person name="Futaki S."/>
            <person name="Gariboldi M."/>
            <person name="Georgii-Hemming P."/>
            <person name="Gingeras T.R."/>
            <person name="Gojobori T."/>
            <person name="Green R.E."/>
            <person name="Gustincich S."/>
            <person name="Harbers M."/>
            <person name="Hayashi Y."/>
            <person name="Hensch T.K."/>
            <person name="Hirokawa N."/>
            <person name="Hill D."/>
            <person name="Huminiecki L."/>
            <person name="Iacono M."/>
            <person name="Ikeo K."/>
            <person name="Iwama A."/>
            <person name="Ishikawa T."/>
            <person name="Jakt M."/>
            <person name="Kanapin A."/>
            <person name="Katoh M."/>
            <person name="Kawasawa Y."/>
            <person name="Kelso J."/>
            <person name="Kitamura H."/>
            <person name="Kitano H."/>
            <person name="Kollias G."/>
            <person name="Krishnan S.P."/>
            <person name="Kruger A."/>
            <person name="Kummerfeld S.K."/>
            <person name="Kurochkin I.V."/>
            <person name="Lareau L.F."/>
            <person name="Lazarevic D."/>
            <person name="Lipovich L."/>
            <person name="Liu J."/>
            <person name="Liuni S."/>
            <person name="McWilliam S."/>
            <person name="Madan Babu M."/>
            <person name="Madera M."/>
            <person name="Marchionni L."/>
            <person name="Matsuda H."/>
            <person name="Matsuzawa S."/>
            <person name="Miki H."/>
            <person name="Mignone F."/>
            <person name="Miyake S."/>
            <person name="Morris K."/>
            <person name="Mottagui-Tabar S."/>
            <person name="Mulder N."/>
            <person name="Nakano N."/>
            <person name="Nakauchi H."/>
            <person name="Ng P."/>
            <person name="Nilsson R."/>
            <person name="Nishiguchi S."/>
            <person name="Nishikawa S."/>
            <person name="Nori F."/>
            <person name="Ohara O."/>
            <person name="Okazaki Y."/>
            <person name="Orlando V."/>
            <person name="Pang K.C."/>
            <person name="Pavan W.J."/>
            <person name="Pavesi G."/>
            <person name="Pesole G."/>
            <person name="Petrovsky N."/>
            <person name="Piazza S."/>
            <person name="Reed J."/>
            <person name="Reid J.F."/>
            <person name="Ring B.Z."/>
            <person name="Ringwald M."/>
            <person name="Rost B."/>
            <person name="Ruan Y."/>
            <person name="Salzberg S.L."/>
            <person name="Sandelin A."/>
            <person name="Schneider C."/>
            <person name="Schoenbach C."/>
            <person name="Sekiguchi K."/>
            <person name="Semple C.A."/>
            <person name="Seno S."/>
            <person name="Sessa L."/>
            <person name="Sheng Y."/>
            <person name="Shibata Y."/>
            <person name="Shimada H."/>
            <person name="Shimada K."/>
            <person name="Silva D."/>
            <person name="Sinclair B."/>
            <person name="Sperling S."/>
            <person name="Stupka E."/>
            <person name="Sugiura K."/>
            <person name="Sultana R."/>
            <person name="Takenaka Y."/>
            <person name="Taki K."/>
            <person name="Tammoja K."/>
            <person name="Tan S.L."/>
            <person name="Tang S."/>
            <person name="Taylor M.S."/>
            <person name="Tegner J."/>
            <person name="Teichmann S.A."/>
            <person name="Ueda H.R."/>
            <person name="van Nimwegen E."/>
            <person name="Verardo R."/>
            <person name="Wei C.L."/>
            <person name="Yagi K."/>
            <person name="Yamanishi H."/>
            <person name="Zabarovsky E."/>
            <person name="Zhu S."/>
            <person name="Zimmer A."/>
            <person name="Hide W."/>
            <person name="Bult C."/>
            <person name="Grimmond S.M."/>
            <person name="Teasdale R.D."/>
            <person name="Liu E.T."/>
            <person name="Brusic V."/>
            <person name="Quackenbush J."/>
            <person name="Wahlestedt C."/>
            <person name="Mattick J.S."/>
            <person name="Hume D.A."/>
            <person name="Kai C."/>
            <person name="Sasaki D."/>
            <person name="Tomaru Y."/>
            <person name="Fukuda S."/>
            <person name="Kanamori-Katayama M."/>
            <person name="Suzuki M."/>
            <person name="Aoki J."/>
            <person name="Arakawa T."/>
            <person name="Iida J."/>
            <person name="Imamura K."/>
            <person name="Itoh M."/>
            <person name="Kato T."/>
            <person name="Kawaji H."/>
            <person name="Kawagashira N."/>
            <person name="Kawashima T."/>
            <person name="Kojima M."/>
            <person name="Kondo S."/>
            <person name="Konno H."/>
            <person name="Nakano K."/>
            <person name="Ninomiya N."/>
            <person name="Nishio T."/>
            <person name="Okada M."/>
            <person name="Plessy C."/>
            <person name="Shibata K."/>
            <person name="Shiraki T."/>
            <person name="Suzuki S."/>
            <person name="Tagami M."/>
            <person name="Waki K."/>
            <person name="Watahiki A."/>
            <person name="Okamura-Oho Y."/>
            <person name="Suzuki H."/>
            <person name="Kawai J."/>
            <person name="Hayashizaki Y."/>
        </authorList>
    </citation>
    <scope>NUCLEOTIDE SEQUENCE [LARGE SCALE MRNA]</scope>
    <source>
        <strain>C57BL/6J</strain>
    </source>
</reference>
<reference key="5">
    <citation type="journal article" date="2004" name="Genome Res.">
        <title>The status, quality, and expansion of the NIH full-length cDNA project: the Mammalian Gene Collection (MGC).</title>
        <authorList>
            <consortium name="The MGC Project Team"/>
        </authorList>
    </citation>
    <scope>NUCLEOTIDE SEQUENCE [LARGE SCALE MRNA]</scope>
    <source>
        <strain>FVB/N</strain>
        <tissue>Kidney</tissue>
    </source>
</reference>
<accession>Q9EP78</accession>
<accession>Q99NB0</accession>
<evidence type="ECO:0000250" key="1"/>
<evidence type="ECO:0000250" key="2">
    <source>
        <dbReference type="UniProtKB" id="Q9NS84"/>
    </source>
</evidence>
<evidence type="ECO:0000255" key="3"/>
<evidence type="ECO:0000256" key="4">
    <source>
        <dbReference type="SAM" id="MobiDB-lite"/>
    </source>
</evidence>
<evidence type="ECO:0000269" key="5">
    <source>
    </source>
</evidence>
<evidence type="ECO:0000305" key="6"/>
<feature type="chain" id="PRO_0000085199" description="Carbohydrate sulfotransferase 7">
    <location>
        <begin position="1"/>
        <end position="484"/>
    </location>
</feature>
<feature type="topological domain" description="Cytoplasmic" evidence="3">
    <location>
        <begin position="1"/>
        <end position="12"/>
    </location>
</feature>
<feature type="transmembrane region" description="Helical; Signal-anchor for type II membrane protein" evidence="3">
    <location>
        <begin position="13"/>
        <end position="33"/>
    </location>
</feature>
<feature type="topological domain" description="Lumenal" evidence="3">
    <location>
        <begin position="34"/>
        <end position="484"/>
    </location>
</feature>
<feature type="region of interest" description="Disordered" evidence="4">
    <location>
        <begin position="71"/>
        <end position="90"/>
    </location>
</feature>
<feature type="region of interest" description="Disordered" evidence="4">
    <location>
        <begin position="460"/>
        <end position="484"/>
    </location>
</feature>
<feature type="compositionally biased region" description="Basic and acidic residues" evidence="4">
    <location>
        <begin position="460"/>
        <end position="473"/>
    </location>
</feature>
<feature type="binding site" evidence="1">
    <location>
        <begin position="108"/>
        <end position="114"/>
    </location>
    <ligand>
        <name>3'-phosphoadenylyl sulfate</name>
        <dbReference type="ChEBI" id="CHEBI:58339"/>
    </ligand>
</feature>
<feature type="binding site" evidence="1">
    <location>
        <begin position="276"/>
        <end position="284"/>
    </location>
    <ligand>
        <name>3'-phosphoadenylyl sulfate</name>
        <dbReference type="ChEBI" id="CHEBI:58339"/>
    </ligand>
</feature>
<feature type="modified residue" description="Phosphoserine" evidence="2">
    <location>
        <position position="460"/>
    </location>
</feature>
<feature type="glycosylation site" description="N-linked (GlcNAc...) asparagine" evidence="3">
    <location>
        <position position="87"/>
    </location>
</feature>
<feature type="glycosylation site" description="N-linked (GlcNAc...) asparagine" evidence="3">
    <location>
        <position position="184"/>
    </location>
</feature>
<feature type="glycosylation site" description="N-linked (GlcNAc...) asparagine" evidence="3">
    <location>
        <position position="405"/>
    </location>
</feature>
<feature type="sequence conflict" description="In Ref. 3; BAB40372." evidence="6" ref="3">
    <original>E</original>
    <variation>K</variation>
    <location>
        <position position="10"/>
    </location>
</feature>
<feature type="sequence conflict" description="In Ref. 3; BAB40372." evidence="6" ref="3">
    <original>E</original>
    <variation>D</variation>
    <location>
        <position position="130"/>
    </location>
</feature>
<keyword id="KW-0119">Carbohydrate metabolism</keyword>
<keyword id="KW-0325">Glycoprotein</keyword>
<keyword id="KW-0333">Golgi apparatus</keyword>
<keyword id="KW-0472">Membrane</keyword>
<keyword id="KW-0597">Phosphoprotein</keyword>
<keyword id="KW-1185">Reference proteome</keyword>
<keyword id="KW-0735">Signal-anchor</keyword>
<keyword id="KW-0808">Transferase</keyword>
<keyword id="KW-0812">Transmembrane</keyword>
<keyword id="KW-1133">Transmembrane helix</keyword>